<comment type="function">
    <text evidence="1">Toxic component of a type II toxin-antitoxin (TA) system. Ribosome-independent, sequence-specific endoribonuclease that cleaves mRNA, thus inhibiting protein synthesis and inducing bacterial stasis. It cuts between the first and nucleotides of 5'-UACAU-3' in single-stranded RNA. Neutralized by coexpression with cognate antitoxin MazE.</text>
</comment>
<comment type="subunit">
    <text evidence="1 2">Homodimer (Ref.2). Forms a complex with MazE which is no longer active as an endoribonuclease.</text>
</comment>
<comment type="similarity">
    <text evidence="3">Belongs to the PemK/MazF family.</text>
</comment>
<evidence type="ECO:0000250" key="1">
    <source>
        <dbReference type="UniProtKB" id="A6QIR4"/>
    </source>
</evidence>
<evidence type="ECO:0000269" key="2">
    <source ref="2"/>
</evidence>
<evidence type="ECO:0000305" key="3"/>
<evidence type="ECO:0007829" key="4">
    <source>
        <dbReference type="PDB" id="4OF1"/>
    </source>
</evidence>
<protein>
    <recommendedName>
        <fullName>Endoribonuclease MazF</fullName>
        <ecNumber>3.1.-.-</ecNumber>
    </recommendedName>
    <alternativeName>
        <fullName>Toxin MazF</fullName>
    </alternativeName>
    <alternativeName>
        <fullName>mRNA interferase MazF</fullName>
    </alternativeName>
</protein>
<reference key="1">
    <citation type="journal article" date="2001" name="Lancet">
        <title>Whole genome sequencing of meticillin-resistant Staphylococcus aureus.</title>
        <authorList>
            <person name="Kuroda M."/>
            <person name="Ohta T."/>
            <person name="Uchiyama I."/>
            <person name="Baba T."/>
            <person name="Yuzawa H."/>
            <person name="Kobayashi I."/>
            <person name="Cui L."/>
            <person name="Oguchi A."/>
            <person name="Aoki K."/>
            <person name="Nagai Y."/>
            <person name="Lian J.-Q."/>
            <person name="Ito T."/>
            <person name="Kanamori M."/>
            <person name="Matsumaru H."/>
            <person name="Maruyama A."/>
            <person name="Murakami H."/>
            <person name="Hosoyama A."/>
            <person name="Mizutani-Ui Y."/>
            <person name="Takahashi N.K."/>
            <person name="Sawano T."/>
            <person name="Inoue R."/>
            <person name="Kaito C."/>
            <person name="Sekimizu K."/>
            <person name="Hirakawa H."/>
            <person name="Kuhara S."/>
            <person name="Goto S."/>
            <person name="Yabuzaki J."/>
            <person name="Kanehisa M."/>
            <person name="Yamashita A."/>
            <person name="Oshima K."/>
            <person name="Furuya K."/>
            <person name="Yoshino C."/>
            <person name="Shiba T."/>
            <person name="Hattori M."/>
            <person name="Ogasawara N."/>
            <person name="Hayashi H."/>
            <person name="Hiramatsu K."/>
        </authorList>
    </citation>
    <scope>NUCLEOTIDE SEQUENCE [LARGE SCALE GENOMIC DNA]</scope>
    <source>
        <strain>Mu50 / ATCC 700699</strain>
    </source>
</reference>
<reference key="2">
    <citation type="submission" date="2015-01" db="PDB data bank">
        <title>Structural insights into the toxin from Staphylococcus aureus Mu50.</title>
        <authorList>
            <person name="Park J.Y."/>
            <person name="Im H."/>
            <person name="Seok S.H."/>
            <person name="Lee B.J."/>
        </authorList>
    </citation>
    <scope>X-RAY CRYSTALLOGRAPHY (2.45 ANGSTROMS)</scope>
    <scope>SUBUNIT</scope>
</reference>
<name>MAZF_STAAM</name>
<accession>Q7A2N3</accession>
<feature type="chain" id="PRO_0000330699" description="Endoribonuclease MazF">
    <location>
        <begin position="1"/>
        <end position="120"/>
    </location>
</feature>
<feature type="strand" evidence="4">
    <location>
        <begin position="6"/>
        <end position="11"/>
    </location>
</feature>
<feature type="strand" evidence="4">
    <location>
        <begin position="22"/>
        <end position="28"/>
    </location>
</feature>
<feature type="helix" evidence="4">
    <location>
        <begin position="32"/>
        <end position="37"/>
    </location>
</feature>
<feature type="strand" evidence="4">
    <location>
        <begin position="38"/>
        <end position="49"/>
    </location>
</feature>
<feature type="strand" evidence="4">
    <location>
        <begin position="58"/>
        <end position="61"/>
    </location>
</feature>
<feature type="helix" evidence="4">
    <location>
        <begin position="63"/>
        <end position="66"/>
    </location>
</feature>
<feature type="strand" evidence="4">
    <location>
        <begin position="72"/>
        <end position="83"/>
    </location>
</feature>
<feature type="helix" evidence="4">
    <location>
        <begin position="84"/>
        <end position="86"/>
    </location>
</feature>
<feature type="strand" evidence="4">
    <location>
        <begin position="87"/>
        <end position="93"/>
    </location>
</feature>
<feature type="helix" evidence="4">
    <location>
        <begin position="96"/>
        <end position="109"/>
    </location>
</feature>
<dbReference type="EC" id="3.1.-.-"/>
<dbReference type="EMBL" id="BA000017">
    <property type="protein sequence ID" value="BAB58230.1"/>
    <property type="molecule type" value="Genomic_DNA"/>
</dbReference>
<dbReference type="RefSeq" id="WP_000621175.1">
    <property type="nucleotide sequence ID" value="NC_002758.2"/>
</dbReference>
<dbReference type="PDB" id="4OF1">
    <property type="method" value="X-ray"/>
    <property type="resolution" value="2.45 A"/>
    <property type="chains" value="A/B=1-120"/>
</dbReference>
<dbReference type="PDBsum" id="4OF1"/>
<dbReference type="SMR" id="Q7A2N3"/>
<dbReference type="KEGG" id="sav:SAV2068"/>
<dbReference type="HOGENOM" id="CLU_121823_1_0_9"/>
<dbReference type="PhylomeDB" id="Q7A2N3"/>
<dbReference type="EvolutionaryTrace" id="Q7A2N3"/>
<dbReference type="Proteomes" id="UP000002481">
    <property type="component" value="Chromosome"/>
</dbReference>
<dbReference type="GO" id="GO:0003677">
    <property type="term" value="F:DNA binding"/>
    <property type="evidence" value="ECO:0007669"/>
    <property type="project" value="InterPro"/>
</dbReference>
<dbReference type="GO" id="GO:0003723">
    <property type="term" value="F:RNA binding"/>
    <property type="evidence" value="ECO:0007669"/>
    <property type="project" value="UniProtKB-KW"/>
</dbReference>
<dbReference type="GO" id="GO:0004521">
    <property type="term" value="F:RNA endonuclease activity"/>
    <property type="evidence" value="ECO:0007669"/>
    <property type="project" value="TreeGrafter"/>
</dbReference>
<dbReference type="GO" id="GO:0006402">
    <property type="term" value="P:mRNA catabolic process"/>
    <property type="evidence" value="ECO:0007669"/>
    <property type="project" value="TreeGrafter"/>
</dbReference>
<dbReference type="GO" id="GO:0016075">
    <property type="term" value="P:rRNA catabolic process"/>
    <property type="evidence" value="ECO:0007669"/>
    <property type="project" value="TreeGrafter"/>
</dbReference>
<dbReference type="Gene3D" id="2.30.30.110">
    <property type="match status" value="1"/>
</dbReference>
<dbReference type="InterPro" id="IPR003477">
    <property type="entry name" value="PemK-like"/>
</dbReference>
<dbReference type="InterPro" id="IPR011067">
    <property type="entry name" value="Plasmid_toxin/cell-grow_inhib"/>
</dbReference>
<dbReference type="PANTHER" id="PTHR33988:SF2">
    <property type="entry name" value="ENDORIBONUCLEASE MAZF"/>
    <property type="match status" value="1"/>
</dbReference>
<dbReference type="PANTHER" id="PTHR33988">
    <property type="entry name" value="ENDORIBONUCLEASE MAZF-RELATED"/>
    <property type="match status" value="1"/>
</dbReference>
<dbReference type="Pfam" id="PF02452">
    <property type="entry name" value="PemK_toxin"/>
    <property type="match status" value="1"/>
</dbReference>
<dbReference type="PIRSF" id="PIRSF033490">
    <property type="entry name" value="MazF"/>
    <property type="match status" value="1"/>
</dbReference>
<dbReference type="SUPFAM" id="SSF50118">
    <property type="entry name" value="Cell growth inhibitor/plasmid maintenance toxic component"/>
    <property type="match status" value="1"/>
</dbReference>
<gene>
    <name type="primary">mazF</name>
    <name type="ordered locus">SAV2068</name>
</gene>
<keyword id="KW-0002">3D-structure</keyword>
<keyword id="KW-0255">Endonuclease</keyword>
<keyword id="KW-0378">Hydrolase</keyword>
<keyword id="KW-0540">Nuclease</keyword>
<keyword id="KW-0694">RNA-binding</keyword>
<keyword id="KW-1277">Toxin-antitoxin system</keyword>
<organism>
    <name type="scientific">Staphylococcus aureus (strain Mu50 / ATCC 700699)</name>
    <dbReference type="NCBI Taxonomy" id="158878"/>
    <lineage>
        <taxon>Bacteria</taxon>
        <taxon>Bacillati</taxon>
        <taxon>Bacillota</taxon>
        <taxon>Bacilli</taxon>
        <taxon>Bacillales</taxon>
        <taxon>Staphylococcaceae</taxon>
        <taxon>Staphylococcus</taxon>
    </lineage>
</organism>
<sequence>MIRRGDVYLADLSPVQGSEQGGVRPVVIIQNDTGNKYSPTVIVAAITGRINKAKIPTHVEIEKKKYKLDKDSVILLEQIRTLDKKRLKEKLTYLSDDKMKEVDNALMISLGLNAVAHQKN</sequence>
<proteinExistence type="evidence at protein level"/>